<dbReference type="EMBL" id="AL954747">
    <property type="protein sequence ID" value="CAD83943.1"/>
    <property type="molecule type" value="Genomic_DNA"/>
</dbReference>
<dbReference type="RefSeq" id="WP_011110684.1">
    <property type="nucleotide sequence ID" value="NC_004757.1"/>
</dbReference>
<dbReference type="SMR" id="Q82Y56"/>
<dbReference type="STRING" id="228410.NE0032"/>
<dbReference type="GeneID" id="87103240"/>
<dbReference type="KEGG" id="neu:NE0032"/>
<dbReference type="eggNOG" id="COG1219">
    <property type="taxonomic scope" value="Bacteria"/>
</dbReference>
<dbReference type="HOGENOM" id="CLU_014218_8_2_4"/>
<dbReference type="OrthoDB" id="9804062at2"/>
<dbReference type="PhylomeDB" id="Q82Y56"/>
<dbReference type="Proteomes" id="UP000001416">
    <property type="component" value="Chromosome"/>
</dbReference>
<dbReference type="GO" id="GO:0009376">
    <property type="term" value="C:HslUV protease complex"/>
    <property type="evidence" value="ECO:0007669"/>
    <property type="project" value="TreeGrafter"/>
</dbReference>
<dbReference type="GO" id="GO:0005524">
    <property type="term" value="F:ATP binding"/>
    <property type="evidence" value="ECO:0007669"/>
    <property type="project" value="UniProtKB-UniRule"/>
</dbReference>
<dbReference type="GO" id="GO:0016887">
    <property type="term" value="F:ATP hydrolysis activity"/>
    <property type="evidence" value="ECO:0007669"/>
    <property type="project" value="InterPro"/>
</dbReference>
<dbReference type="GO" id="GO:0140662">
    <property type="term" value="F:ATP-dependent protein folding chaperone"/>
    <property type="evidence" value="ECO:0007669"/>
    <property type="project" value="InterPro"/>
</dbReference>
<dbReference type="GO" id="GO:0046983">
    <property type="term" value="F:protein dimerization activity"/>
    <property type="evidence" value="ECO:0007669"/>
    <property type="project" value="InterPro"/>
</dbReference>
<dbReference type="GO" id="GO:0051082">
    <property type="term" value="F:unfolded protein binding"/>
    <property type="evidence" value="ECO:0007669"/>
    <property type="project" value="UniProtKB-UniRule"/>
</dbReference>
<dbReference type="GO" id="GO:0008270">
    <property type="term" value="F:zinc ion binding"/>
    <property type="evidence" value="ECO:0007669"/>
    <property type="project" value="InterPro"/>
</dbReference>
<dbReference type="GO" id="GO:0051301">
    <property type="term" value="P:cell division"/>
    <property type="evidence" value="ECO:0007669"/>
    <property type="project" value="TreeGrafter"/>
</dbReference>
<dbReference type="GO" id="GO:0051603">
    <property type="term" value="P:proteolysis involved in protein catabolic process"/>
    <property type="evidence" value="ECO:0007669"/>
    <property type="project" value="TreeGrafter"/>
</dbReference>
<dbReference type="CDD" id="cd19497">
    <property type="entry name" value="RecA-like_ClpX"/>
    <property type="match status" value="1"/>
</dbReference>
<dbReference type="FunFam" id="1.10.8.60:FF:000002">
    <property type="entry name" value="ATP-dependent Clp protease ATP-binding subunit ClpX"/>
    <property type="match status" value="1"/>
</dbReference>
<dbReference type="FunFam" id="3.40.50.300:FF:000005">
    <property type="entry name" value="ATP-dependent Clp protease ATP-binding subunit ClpX"/>
    <property type="match status" value="1"/>
</dbReference>
<dbReference type="Gene3D" id="1.10.8.60">
    <property type="match status" value="1"/>
</dbReference>
<dbReference type="Gene3D" id="6.20.220.10">
    <property type="entry name" value="ClpX chaperone, C4-type zinc finger domain"/>
    <property type="match status" value="1"/>
</dbReference>
<dbReference type="Gene3D" id="3.40.50.300">
    <property type="entry name" value="P-loop containing nucleotide triphosphate hydrolases"/>
    <property type="match status" value="1"/>
</dbReference>
<dbReference type="HAMAP" id="MF_00175">
    <property type="entry name" value="ClpX"/>
    <property type="match status" value="1"/>
</dbReference>
<dbReference type="InterPro" id="IPR003593">
    <property type="entry name" value="AAA+_ATPase"/>
</dbReference>
<dbReference type="InterPro" id="IPR050052">
    <property type="entry name" value="ATP-dep_Clp_protease_ClpX"/>
</dbReference>
<dbReference type="InterPro" id="IPR003959">
    <property type="entry name" value="ATPase_AAA_core"/>
</dbReference>
<dbReference type="InterPro" id="IPR019489">
    <property type="entry name" value="Clp_ATPase_C"/>
</dbReference>
<dbReference type="InterPro" id="IPR004487">
    <property type="entry name" value="Clp_protease_ATP-bd_su_ClpX"/>
</dbReference>
<dbReference type="InterPro" id="IPR046425">
    <property type="entry name" value="ClpX_bact"/>
</dbReference>
<dbReference type="InterPro" id="IPR027417">
    <property type="entry name" value="P-loop_NTPase"/>
</dbReference>
<dbReference type="InterPro" id="IPR010603">
    <property type="entry name" value="Znf_CppX_C4"/>
</dbReference>
<dbReference type="InterPro" id="IPR038366">
    <property type="entry name" value="Znf_CppX_C4_sf"/>
</dbReference>
<dbReference type="NCBIfam" id="TIGR00382">
    <property type="entry name" value="clpX"/>
    <property type="match status" value="1"/>
</dbReference>
<dbReference type="NCBIfam" id="NF003745">
    <property type="entry name" value="PRK05342.1"/>
    <property type="match status" value="1"/>
</dbReference>
<dbReference type="PANTHER" id="PTHR48102:SF7">
    <property type="entry name" value="ATP-DEPENDENT CLP PROTEASE ATP-BINDING SUBUNIT CLPX-LIKE, MITOCHONDRIAL"/>
    <property type="match status" value="1"/>
</dbReference>
<dbReference type="PANTHER" id="PTHR48102">
    <property type="entry name" value="ATP-DEPENDENT CLP PROTEASE ATP-BINDING SUBUNIT CLPX-LIKE, MITOCHONDRIAL-RELATED"/>
    <property type="match status" value="1"/>
</dbReference>
<dbReference type="Pfam" id="PF07724">
    <property type="entry name" value="AAA_2"/>
    <property type="match status" value="1"/>
</dbReference>
<dbReference type="Pfam" id="PF10431">
    <property type="entry name" value="ClpB_D2-small"/>
    <property type="match status" value="1"/>
</dbReference>
<dbReference type="Pfam" id="PF06689">
    <property type="entry name" value="zf-C4_ClpX"/>
    <property type="match status" value="1"/>
</dbReference>
<dbReference type="SMART" id="SM00382">
    <property type="entry name" value="AAA"/>
    <property type="match status" value="1"/>
</dbReference>
<dbReference type="SMART" id="SM01086">
    <property type="entry name" value="ClpB_D2-small"/>
    <property type="match status" value="1"/>
</dbReference>
<dbReference type="SMART" id="SM00994">
    <property type="entry name" value="zf-C4_ClpX"/>
    <property type="match status" value="1"/>
</dbReference>
<dbReference type="SUPFAM" id="SSF57716">
    <property type="entry name" value="Glucocorticoid receptor-like (DNA-binding domain)"/>
    <property type="match status" value="1"/>
</dbReference>
<dbReference type="SUPFAM" id="SSF52540">
    <property type="entry name" value="P-loop containing nucleoside triphosphate hydrolases"/>
    <property type="match status" value="1"/>
</dbReference>
<dbReference type="PROSITE" id="PS51902">
    <property type="entry name" value="CLPX_ZB"/>
    <property type="match status" value="1"/>
</dbReference>
<accession>Q82Y56</accession>
<name>CLPX_NITEU</name>
<proteinExistence type="inferred from homology"/>
<gene>
    <name evidence="1" type="primary">clpX</name>
    <name type="ordered locus">NE0032</name>
</gene>
<organism>
    <name type="scientific">Nitrosomonas europaea (strain ATCC 19718 / CIP 103999 / KCTC 2705 / NBRC 14298)</name>
    <dbReference type="NCBI Taxonomy" id="228410"/>
    <lineage>
        <taxon>Bacteria</taxon>
        <taxon>Pseudomonadati</taxon>
        <taxon>Pseudomonadota</taxon>
        <taxon>Betaproteobacteria</taxon>
        <taxon>Nitrosomonadales</taxon>
        <taxon>Nitrosomonadaceae</taxon>
        <taxon>Nitrosomonas</taxon>
    </lineage>
</organism>
<evidence type="ECO:0000255" key="1">
    <source>
        <dbReference type="HAMAP-Rule" id="MF_00175"/>
    </source>
</evidence>
<evidence type="ECO:0000255" key="2">
    <source>
        <dbReference type="PROSITE-ProRule" id="PRU01250"/>
    </source>
</evidence>
<protein>
    <recommendedName>
        <fullName evidence="1">ATP-dependent Clp protease ATP-binding subunit ClpX</fullName>
    </recommendedName>
</protein>
<keyword id="KW-0067">ATP-binding</keyword>
<keyword id="KW-0143">Chaperone</keyword>
<keyword id="KW-0479">Metal-binding</keyword>
<keyword id="KW-0547">Nucleotide-binding</keyword>
<keyword id="KW-1185">Reference proteome</keyword>
<keyword id="KW-0862">Zinc</keyword>
<sequence>MSEKTNDEKLLYCSFCGKSQREVRKLIAGPSVFICDECIDLCNDIIREEIQVDETAKLAKTSLPTPHEIRETLDQYVIGQESAKKILSVAVYNHYKRLKNLSKVNNGDDVELSKSNILLIGPTGSGKTLLAQTLARLLDVPFVIADATTLTEAGYVGEDVENIIQKLLQKCNHDVEKAQRGIVYIDEIDKISRKSDNPSITRDVSGEGVQQALLKLIEGTTALVPPQGGRKHPNQEFIQIDTTNILFICGGAFDGIDKIIRGRSEKSGIGFGADVINQNDRKELNKILKDIEPEDLIKYGLIPEFVGRLPVVATLSELNEAALIQILVEPKNALIKQYNKLFSMEGGVELEFREQALVAIARKALSRKTGARGLRSILEETLLDIMYDLPSIENVSKVVIESGSNHDELQPIVIYAEKPKLARSSK</sequence>
<feature type="chain" id="PRO_0000160392" description="ATP-dependent Clp protease ATP-binding subunit ClpX">
    <location>
        <begin position="1"/>
        <end position="426"/>
    </location>
</feature>
<feature type="domain" description="ClpX-type ZB" evidence="2">
    <location>
        <begin position="1"/>
        <end position="54"/>
    </location>
</feature>
<feature type="binding site" evidence="2">
    <location>
        <position position="13"/>
    </location>
    <ligand>
        <name>Zn(2+)</name>
        <dbReference type="ChEBI" id="CHEBI:29105"/>
    </ligand>
</feature>
<feature type="binding site" evidence="2">
    <location>
        <position position="16"/>
    </location>
    <ligand>
        <name>Zn(2+)</name>
        <dbReference type="ChEBI" id="CHEBI:29105"/>
    </ligand>
</feature>
<feature type="binding site" evidence="2">
    <location>
        <position position="35"/>
    </location>
    <ligand>
        <name>Zn(2+)</name>
        <dbReference type="ChEBI" id="CHEBI:29105"/>
    </ligand>
</feature>
<feature type="binding site" evidence="2">
    <location>
        <position position="38"/>
    </location>
    <ligand>
        <name>Zn(2+)</name>
        <dbReference type="ChEBI" id="CHEBI:29105"/>
    </ligand>
</feature>
<feature type="binding site" evidence="1">
    <location>
        <begin position="122"/>
        <end position="129"/>
    </location>
    <ligand>
        <name>ATP</name>
        <dbReference type="ChEBI" id="CHEBI:30616"/>
    </ligand>
</feature>
<reference key="1">
    <citation type="journal article" date="2003" name="J. Bacteriol.">
        <title>Complete genome sequence of the ammonia-oxidizing bacterium and obligate chemolithoautotroph Nitrosomonas europaea.</title>
        <authorList>
            <person name="Chain P."/>
            <person name="Lamerdin J.E."/>
            <person name="Larimer F.W."/>
            <person name="Regala W."/>
            <person name="Lao V."/>
            <person name="Land M.L."/>
            <person name="Hauser L."/>
            <person name="Hooper A.B."/>
            <person name="Klotz M.G."/>
            <person name="Norton J."/>
            <person name="Sayavedra-Soto L.A."/>
            <person name="Arciero D.M."/>
            <person name="Hommes N.G."/>
            <person name="Whittaker M.M."/>
            <person name="Arp D.J."/>
        </authorList>
    </citation>
    <scope>NUCLEOTIDE SEQUENCE [LARGE SCALE GENOMIC DNA]</scope>
    <source>
        <strain>ATCC 19718 / CIP 103999 / KCTC 2705 / NBRC 14298</strain>
    </source>
</reference>
<comment type="function">
    <text evidence="1">ATP-dependent specificity component of the Clp protease. It directs the protease to specific substrates. Can perform chaperone functions in the absence of ClpP.</text>
</comment>
<comment type="subunit">
    <text evidence="1">Component of the ClpX-ClpP complex. Forms a hexameric ring that, in the presence of ATP, binds to fourteen ClpP subunits assembled into a disk-like structure with a central cavity, resembling the structure of eukaryotic proteasomes.</text>
</comment>
<comment type="similarity">
    <text evidence="1">Belongs to the ClpX chaperone family.</text>
</comment>